<accession>P08145</accession>
<sequence length="33" mass="4391">MPRRRRSSRPPVRRRRRPRVSRRRRRRGGRRRR</sequence>
<organism>
    <name type="scientific">Oncorhynchus mykiss</name>
    <name type="common">Rainbow trout</name>
    <name type="synonym">Salmo gairdneri</name>
    <dbReference type="NCBI Taxonomy" id="8022"/>
    <lineage>
        <taxon>Eukaryota</taxon>
        <taxon>Metazoa</taxon>
        <taxon>Chordata</taxon>
        <taxon>Craniata</taxon>
        <taxon>Vertebrata</taxon>
        <taxon>Euteleostomi</taxon>
        <taxon>Actinopterygii</taxon>
        <taxon>Neopterygii</taxon>
        <taxon>Teleostei</taxon>
        <taxon>Protacanthopterygii</taxon>
        <taxon>Salmoniformes</taxon>
        <taxon>Salmonidae</taxon>
        <taxon>Salmoninae</taxon>
        <taxon>Oncorhynchus</taxon>
    </lineage>
</organism>
<name>PRT14_ONCMY</name>
<protein>
    <recommendedName>
        <fullName>Protamine TP14</fullName>
    </recommendedName>
</protein>
<dbReference type="EMBL" id="X01595">
    <property type="protein sequence ID" value="CAA25748.1"/>
    <property type="molecule type" value="Genomic_DNA"/>
</dbReference>
<dbReference type="PIR" id="A21211">
    <property type="entry name" value="A21211"/>
</dbReference>
<dbReference type="Proteomes" id="UP000694395">
    <property type="component" value="Unplaced"/>
</dbReference>
<dbReference type="GO" id="GO:0000786">
    <property type="term" value="C:nucleosome"/>
    <property type="evidence" value="ECO:0007669"/>
    <property type="project" value="UniProtKB-KW"/>
</dbReference>
<dbReference type="GO" id="GO:0005634">
    <property type="term" value="C:nucleus"/>
    <property type="evidence" value="ECO:0007669"/>
    <property type="project" value="UniProtKB-SubCell"/>
</dbReference>
<dbReference type="GO" id="GO:0003677">
    <property type="term" value="F:DNA binding"/>
    <property type="evidence" value="ECO:0007669"/>
    <property type="project" value="UniProtKB-KW"/>
</dbReference>
<dbReference type="GO" id="GO:0030154">
    <property type="term" value="P:cell differentiation"/>
    <property type="evidence" value="ECO:0007669"/>
    <property type="project" value="UniProtKB-KW"/>
</dbReference>
<dbReference type="GO" id="GO:0030261">
    <property type="term" value="P:chromosome condensation"/>
    <property type="evidence" value="ECO:0007669"/>
    <property type="project" value="UniProtKB-KW"/>
</dbReference>
<dbReference type="GO" id="GO:0007283">
    <property type="term" value="P:spermatogenesis"/>
    <property type="evidence" value="ECO:0007669"/>
    <property type="project" value="UniProtKB-KW"/>
</dbReference>
<proteinExistence type="evidence at transcript level"/>
<comment type="function">
    <text>Protamines substitute for histones in the chromatin of sperm during the haploid phase of spermatogenesis. They compact sperm DNA into a highly condensed, stable and inactive complex.</text>
</comment>
<comment type="subcellular location">
    <subcellularLocation>
        <location>Nucleus</location>
    </subcellularLocation>
    <subcellularLocation>
        <location>Chromosome</location>
    </subcellularLocation>
</comment>
<comment type="tissue specificity">
    <text>Testis.</text>
</comment>
<evidence type="ECO:0000256" key="1">
    <source>
        <dbReference type="SAM" id="MobiDB-lite"/>
    </source>
</evidence>
<reference key="1">
    <citation type="journal article" date="1983" name="Nucleic Acids Res.">
        <title>Sequence homologies in the protamine gene family of rainbow trout.</title>
        <authorList>
            <person name="Aiken J.M."/>
            <person name="McKenzie D."/>
            <person name="Zhao H.-Z."/>
            <person name="States J.C."/>
            <person name="Dixon G.H."/>
        </authorList>
    </citation>
    <scope>NUCLEOTIDE SEQUENCE [GENOMIC DNA]</scope>
</reference>
<keyword id="KW-0158">Chromosome</keyword>
<keyword id="KW-0217">Developmental protein</keyword>
<keyword id="KW-0221">Differentiation</keyword>
<keyword id="KW-0226">DNA condensation</keyword>
<keyword id="KW-0238">DNA-binding</keyword>
<keyword id="KW-0544">Nucleosome core</keyword>
<keyword id="KW-0539">Nucleus</keyword>
<keyword id="KW-0744">Spermatogenesis</keyword>
<feature type="initiator methionine" description="Removed">
    <location>
        <position position="1"/>
    </location>
</feature>
<feature type="peptide" id="PRO_0000044839" description="Protamine TP14">
    <location>
        <begin position="2"/>
        <end position="33"/>
    </location>
</feature>
<feature type="region of interest" description="Disordered" evidence="1">
    <location>
        <begin position="1"/>
        <end position="33"/>
    </location>
</feature>